<gene>
    <name type="ORF">FG00038</name>
    <name type="ORF">FGRAMPH1_01T00133</name>
    <name type="ORF">FGSG_00038</name>
</gene>
<evidence type="ECO:0000269" key="1">
    <source>
    </source>
</evidence>
<evidence type="ECO:0000303" key="2">
    <source>
    </source>
</evidence>
<evidence type="ECO:0000305" key="3">
    <source>
    </source>
</evidence>
<proteinExistence type="predicted"/>
<comment type="function">
    <text evidence="1 3">Part of the gene cluster that mediates the biosynthesis of gramillins A and B, bicyclic lipopeptides that induce cell death in maize leaves but not in wheat leaves (PubMed:30395461). The nonribosomal peptide synthetase GRA1 incorporates respectively a glutamic adic (Glu), a leucine (Leu), a serine (Ser), a hydroxyglutamine (HOGln), a 2-amino decanoic acid, and 2 cysteins (CysB and CysA) (Probable). The biosynthesis of 2-amino decanoic acid incorporated in gramillins could be initiated by a fatty acid synthase composed of the alpha and beta subunits FGSG_00036 and FGSG_11656 (Probable). The cytochrome P450 monooxygenase FGSG_15680 could hydroxylate the fatty acid chain (Probable). Subsequent oxidation to the ketone by the oxidoreductase FGSG_00048 and transamination by aminotransferase FGSG_00049 could form 2-amino-decanoic acid (Probable). On the other hand, FGSG_15680 could also be responsible for the HO-modified glutamine at the gamma-position (Probable). Whether hydroxylation occurs on the fully assembled product or on the Gln residue prior to assembly into the gramillins requires further proof (Probable). The thioredoxin FGSG_00043 could also be required for the disulfide-bond formation between CysA and CysB (Probable). The specific involvement of the remaining proteins from the cluster is more difficult to discern, but could have broader regulatory (FGSG_00040 and FGSG_11657) or enzymatic functions (FGSG_00044 and FGSG_00045) (Probable). The final C-domain of GRA1 does not possess the expected sequence of a termination CT domain, often implicated in macrocyclization and release of a cyclopeptidein fungal NRPs; and the thioesterase FGSG_00047 may act in concert with the terminal C-domain of GRA1 to catalyze the formation of the macrocyclic anhydride and release of the products (Probable).</text>
</comment>
<comment type="pathway">
    <text evidence="3">Mycotoxin biosynthesis.</text>
</comment>
<keyword id="KW-1185">Reference proteome</keyword>
<keyword id="KW-0843">Virulence</keyword>
<name>GRA6_GIBZE</name>
<reference key="1">
    <citation type="journal article" date="2007" name="Science">
        <title>The Fusarium graminearum genome reveals a link between localized polymorphism and pathogen specialization.</title>
        <authorList>
            <person name="Cuomo C.A."/>
            <person name="Gueldener U."/>
            <person name="Xu J.-R."/>
            <person name="Trail F."/>
            <person name="Turgeon B.G."/>
            <person name="Di Pietro A."/>
            <person name="Walton J.D."/>
            <person name="Ma L.-J."/>
            <person name="Baker S.E."/>
            <person name="Rep M."/>
            <person name="Adam G."/>
            <person name="Antoniw J."/>
            <person name="Baldwin T."/>
            <person name="Calvo S.E."/>
            <person name="Chang Y.-L."/>
            <person name="DeCaprio D."/>
            <person name="Gale L.R."/>
            <person name="Gnerre S."/>
            <person name="Goswami R.S."/>
            <person name="Hammond-Kosack K."/>
            <person name="Harris L.J."/>
            <person name="Hilburn K."/>
            <person name="Kennell J.C."/>
            <person name="Kroken S."/>
            <person name="Magnuson J.K."/>
            <person name="Mannhaupt G."/>
            <person name="Mauceli E.W."/>
            <person name="Mewes H.-W."/>
            <person name="Mitterbauer R."/>
            <person name="Muehlbauer G."/>
            <person name="Muensterkoetter M."/>
            <person name="Nelson D."/>
            <person name="O'Donnell K."/>
            <person name="Ouellet T."/>
            <person name="Qi W."/>
            <person name="Quesneville H."/>
            <person name="Roncero M.I.G."/>
            <person name="Seong K.-Y."/>
            <person name="Tetko I.V."/>
            <person name="Urban M."/>
            <person name="Waalwijk C."/>
            <person name="Ward T.J."/>
            <person name="Yao J."/>
            <person name="Birren B.W."/>
            <person name="Kistler H.C."/>
        </authorList>
    </citation>
    <scope>NUCLEOTIDE SEQUENCE [LARGE SCALE GENOMIC DNA]</scope>
    <source>
        <strain>ATCC MYA-4620 / CBS 123657 / FGSC 9075 / NRRL 31084 / PH-1</strain>
    </source>
</reference>
<reference key="2">
    <citation type="journal article" date="2010" name="Nature">
        <title>Comparative genomics reveals mobile pathogenicity chromosomes in Fusarium.</title>
        <authorList>
            <person name="Ma L.-J."/>
            <person name="van der Does H.C."/>
            <person name="Borkovich K.A."/>
            <person name="Coleman J.J."/>
            <person name="Daboussi M.-J."/>
            <person name="Di Pietro A."/>
            <person name="Dufresne M."/>
            <person name="Freitag M."/>
            <person name="Grabherr M."/>
            <person name="Henrissat B."/>
            <person name="Houterman P.M."/>
            <person name="Kang S."/>
            <person name="Shim W.-B."/>
            <person name="Woloshuk C."/>
            <person name="Xie X."/>
            <person name="Xu J.-R."/>
            <person name="Antoniw J."/>
            <person name="Baker S.E."/>
            <person name="Bluhm B.H."/>
            <person name="Breakspear A."/>
            <person name="Brown D.W."/>
            <person name="Butchko R.A.E."/>
            <person name="Chapman S."/>
            <person name="Coulson R."/>
            <person name="Coutinho P.M."/>
            <person name="Danchin E.G.J."/>
            <person name="Diener A."/>
            <person name="Gale L.R."/>
            <person name="Gardiner D.M."/>
            <person name="Goff S."/>
            <person name="Hammond-Kosack K.E."/>
            <person name="Hilburn K."/>
            <person name="Hua-Van A."/>
            <person name="Jonkers W."/>
            <person name="Kazan K."/>
            <person name="Kodira C.D."/>
            <person name="Koehrsen M."/>
            <person name="Kumar L."/>
            <person name="Lee Y.-H."/>
            <person name="Li L."/>
            <person name="Manners J.M."/>
            <person name="Miranda-Saavedra D."/>
            <person name="Mukherjee M."/>
            <person name="Park G."/>
            <person name="Park J."/>
            <person name="Park S.-Y."/>
            <person name="Proctor R.H."/>
            <person name="Regev A."/>
            <person name="Ruiz-Roldan M.C."/>
            <person name="Sain D."/>
            <person name="Sakthikumar S."/>
            <person name="Sykes S."/>
            <person name="Schwartz D.C."/>
            <person name="Turgeon B.G."/>
            <person name="Wapinski I."/>
            <person name="Yoder O."/>
            <person name="Young S."/>
            <person name="Zeng Q."/>
            <person name="Zhou S."/>
            <person name="Galagan J."/>
            <person name="Cuomo C.A."/>
            <person name="Kistler H.C."/>
            <person name="Rep M."/>
        </authorList>
    </citation>
    <scope>GENOME REANNOTATION</scope>
    <source>
        <strain>ATCC MYA-4620 / CBS 123657 / FGSC 9075 / NRRL 31084 / PH-1</strain>
    </source>
</reference>
<reference key="3">
    <citation type="journal article" date="2015" name="BMC Genomics">
        <title>The completed genome sequence of the pathogenic ascomycete fungus Fusarium graminearum.</title>
        <authorList>
            <person name="King R."/>
            <person name="Urban M."/>
            <person name="Hammond-Kosack M.C.U."/>
            <person name="Hassani-Pak K."/>
            <person name="Hammond-Kosack K.E."/>
        </authorList>
    </citation>
    <scope>NUCLEOTIDE SEQUENCE [LARGE SCALE GENOMIC DNA]</scope>
    <source>
        <strain>ATCC MYA-4620 / CBS 123657 / FGSC 9075 / NRRL 31084 / PH-1</strain>
    </source>
</reference>
<reference key="4">
    <citation type="journal article" date="2018" name="J. Am. Chem. Soc.">
        <title>Gramillin A and B: cyclic lipopeptides identified as the nonribosomal biosynthetic products of Fusarium graminearum.</title>
        <authorList>
            <person name="Bahadoor A."/>
            <person name="Brauer E.K."/>
            <person name="Bosnich W."/>
            <person name="Schneiderman D."/>
            <person name="Johnston A."/>
            <person name="Aubin Y."/>
            <person name="Blackwell B."/>
            <person name="Melanson J.E."/>
            <person name="Harris L.J."/>
        </authorList>
    </citation>
    <scope>FUNCTION</scope>
    <scope>PATHWAY</scope>
</reference>
<organism>
    <name type="scientific">Gibberella zeae (strain ATCC MYA-4620 / CBS 123657 / FGSC 9075 / NRRL 31084 / PH-1)</name>
    <name type="common">Wheat head blight fungus</name>
    <name type="synonym">Fusarium graminearum</name>
    <dbReference type="NCBI Taxonomy" id="229533"/>
    <lineage>
        <taxon>Eukaryota</taxon>
        <taxon>Fungi</taxon>
        <taxon>Dikarya</taxon>
        <taxon>Ascomycota</taxon>
        <taxon>Pezizomycotina</taxon>
        <taxon>Sordariomycetes</taxon>
        <taxon>Hypocreomycetidae</taxon>
        <taxon>Hypocreales</taxon>
        <taxon>Nectriaceae</taxon>
        <taxon>Fusarium</taxon>
    </lineage>
</organism>
<accession>A0A098D1N7</accession>
<accession>A0A0E0RKU1</accession>
<protein>
    <recommendedName>
        <fullName evidence="2">Gramillins biosynthetic cluster protein FGSG_00038</fullName>
    </recommendedName>
</protein>
<sequence>MSNIAHGNPQKRPGYAIDIEASCRKRGKSAPAEDCLNEAKTPLDEIESRVVALQRQIANLNSGTLLQSIKEATARLATSWALVTKHQRYVDGYQELALPDAPTYHVQALKTAQSDLEKASQDAQAADGVLASAQKEQRDFKRVEENLVMLGAERATLDQSVRDLTLDKERCDVYLGMVEYGPDGLATLLEKDVGAWKGMLDLV</sequence>
<feature type="chain" id="PRO_0000450571" description="Gramillins biosynthetic cluster protein FGSG_00038">
    <location>
        <begin position="1"/>
        <end position="203"/>
    </location>
</feature>
<dbReference type="EMBL" id="HG970332">
    <property type="protein sequence ID" value="CEF71866.1"/>
    <property type="molecule type" value="Genomic_DNA"/>
</dbReference>
<dbReference type="SMR" id="A0A098D1N7"/>
<dbReference type="VEuPathDB" id="FungiDB:FGRAMPH1_01G00133"/>
<dbReference type="eggNOG" id="ENOG502RNPS">
    <property type="taxonomic scope" value="Eukaryota"/>
</dbReference>
<dbReference type="InParanoid" id="A0A098D1N7"/>
<dbReference type="Proteomes" id="UP000070720">
    <property type="component" value="Chromosome 1"/>
</dbReference>